<accession>D4ATA2</accession>
<dbReference type="EMBL" id="ABSU01000009">
    <property type="protein sequence ID" value="EFE33521.1"/>
    <property type="molecule type" value="Genomic_DNA"/>
</dbReference>
<dbReference type="RefSeq" id="XP_003014161.1">
    <property type="nucleotide sequence ID" value="XM_003014115.1"/>
</dbReference>
<dbReference type="STRING" id="663331.D4ATA2"/>
<dbReference type="GeneID" id="9521579"/>
<dbReference type="KEGG" id="abe:ARB_07466"/>
<dbReference type="eggNOG" id="ENOG502RZ4I">
    <property type="taxonomic scope" value="Eukaryota"/>
</dbReference>
<dbReference type="HOGENOM" id="CLU_109885_0_0_1"/>
<dbReference type="OMA" id="IREIGCK"/>
<dbReference type="Proteomes" id="UP000008866">
    <property type="component" value="Unassembled WGS sequence"/>
</dbReference>
<dbReference type="GO" id="GO:0005576">
    <property type="term" value="C:extracellular region"/>
    <property type="evidence" value="ECO:0007669"/>
    <property type="project" value="UniProtKB-SubCell"/>
</dbReference>
<gene>
    <name type="ORF">ARB_07466</name>
</gene>
<feature type="signal peptide" evidence="1">
    <location>
        <begin position="1"/>
        <end position="19"/>
    </location>
</feature>
<feature type="chain" id="PRO_5003054229" description="Uncharacterized secreted protein ARB_07466">
    <location>
        <begin position="20"/>
        <end position="245"/>
    </location>
</feature>
<comment type="subcellular location">
    <subcellularLocation>
        <location evidence="2">Secreted</location>
    </subcellularLocation>
</comment>
<keyword id="KW-1185">Reference proteome</keyword>
<keyword id="KW-0964">Secreted</keyword>
<keyword id="KW-0732">Signal</keyword>
<protein>
    <recommendedName>
        <fullName>Uncharacterized secreted protein ARB_07466</fullName>
    </recommendedName>
</protein>
<proteinExistence type="evidence at protein level"/>
<name>A7466_ARTBC</name>
<sequence>MKLTQFISYAILSLSGVQAATLNGPCTGARGAPGICISTSSCTKAGGSYISNACPGLPIGIKCCSKTSCGDGGNCRFTSACSSGNTQAGLCPGPSSFQCCLPKASGGGKFPPPKIPAVGRCKKTAVDGAKKIVAAHPGMVREIFCIRDCPCPSNSEHCCGLATDMMCTSEAGEYSKLTWHGIVKKRDRDAFGRVMAEWVMNHRKILNLKYVIWGQRIWNPSLDKVSPWTNWRQMEDRGSITQNHW</sequence>
<evidence type="ECO:0000255" key="1"/>
<evidence type="ECO:0000269" key="2">
    <source>
    </source>
</evidence>
<organism>
    <name type="scientific">Arthroderma benhamiae (strain ATCC MYA-4681 / CBS 112371)</name>
    <name type="common">Trichophyton mentagrophytes</name>
    <dbReference type="NCBI Taxonomy" id="663331"/>
    <lineage>
        <taxon>Eukaryota</taxon>
        <taxon>Fungi</taxon>
        <taxon>Dikarya</taxon>
        <taxon>Ascomycota</taxon>
        <taxon>Pezizomycotina</taxon>
        <taxon>Eurotiomycetes</taxon>
        <taxon>Eurotiomycetidae</taxon>
        <taxon>Onygenales</taxon>
        <taxon>Arthrodermataceae</taxon>
        <taxon>Trichophyton</taxon>
    </lineage>
</organism>
<reference key="1">
    <citation type="journal article" date="2011" name="Genome Biol.">
        <title>Comparative and functional genomics provide insights into the pathogenicity of dermatophytic fungi.</title>
        <authorList>
            <person name="Burmester A."/>
            <person name="Shelest E."/>
            <person name="Gloeckner G."/>
            <person name="Heddergott C."/>
            <person name="Schindler S."/>
            <person name="Staib P."/>
            <person name="Heidel A."/>
            <person name="Felder M."/>
            <person name="Petzold A."/>
            <person name="Szafranski K."/>
            <person name="Feuermann M."/>
            <person name="Pedruzzi I."/>
            <person name="Priebe S."/>
            <person name="Groth M."/>
            <person name="Winkler R."/>
            <person name="Li W."/>
            <person name="Kniemeyer O."/>
            <person name="Schroeckh V."/>
            <person name="Hertweck C."/>
            <person name="Hube B."/>
            <person name="White T.C."/>
            <person name="Platzer M."/>
            <person name="Guthke R."/>
            <person name="Heitman J."/>
            <person name="Woestemeyer J."/>
            <person name="Zipfel P.F."/>
            <person name="Monod M."/>
            <person name="Brakhage A.A."/>
        </authorList>
    </citation>
    <scope>NUCLEOTIDE SEQUENCE [LARGE SCALE GENOMIC DNA]</scope>
    <source>
        <strain>ATCC MYA-4681 / CBS 112371</strain>
    </source>
</reference>
<reference key="2">
    <citation type="journal article" date="2011" name="Proteomics">
        <title>Identification of novel secreted proteases during extracellular proteolysis by dermatophytes at acidic pH.</title>
        <authorList>
            <person name="Sriranganadane D."/>
            <person name="Waridel P."/>
            <person name="Salamin K."/>
            <person name="Feuermann M."/>
            <person name="Mignon B."/>
            <person name="Staib P."/>
            <person name="Neuhaus J.M."/>
            <person name="Quadroni M."/>
            <person name="Monod M."/>
        </authorList>
    </citation>
    <scope>IDENTIFICATION BY MASS SPECTROMETRY</scope>
    <scope>SUBCELLULAR LOCATION</scope>
</reference>